<feature type="chain" id="PRO_1000202572" description="[LysW]-aminoadipate/[LysW]-glutamate kinase">
    <location>
        <begin position="1"/>
        <end position="264"/>
    </location>
</feature>
<feature type="binding site" evidence="1">
    <location>
        <begin position="35"/>
        <end position="36"/>
    </location>
    <ligand>
        <name>substrate</name>
    </ligand>
</feature>
<feature type="binding site" evidence="1">
    <location>
        <position position="62"/>
    </location>
    <ligand>
        <name>substrate</name>
    </ligand>
</feature>
<feature type="binding site" evidence="1">
    <location>
        <position position="167"/>
    </location>
    <ligand>
        <name>substrate</name>
    </ligand>
</feature>
<feature type="site" description="Transition state stabilizer" evidence="1">
    <location>
        <position position="5"/>
    </location>
</feature>
<feature type="site" description="Transition state stabilizer" evidence="1">
    <location>
        <position position="224"/>
    </location>
</feature>
<organism>
    <name type="scientific">Saccharolobus islandicus (strain Y.N.15.51 / Yellowstone #2)</name>
    <name type="common">Sulfolobus islandicus</name>
    <dbReference type="NCBI Taxonomy" id="419942"/>
    <lineage>
        <taxon>Archaea</taxon>
        <taxon>Thermoproteota</taxon>
        <taxon>Thermoprotei</taxon>
        <taxon>Sulfolobales</taxon>
        <taxon>Sulfolobaceae</taxon>
        <taxon>Saccharolobus</taxon>
    </lineage>
</organism>
<keyword id="KW-0028">Amino-acid biosynthesis</keyword>
<keyword id="KW-0055">Arginine biosynthesis</keyword>
<keyword id="KW-0067">ATP-binding</keyword>
<keyword id="KW-0963">Cytoplasm</keyword>
<keyword id="KW-0418">Kinase</keyword>
<keyword id="KW-0457">Lysine biosynthesis</keyword>
<keyword id="KW-0547">Nucleotide-binding</keyword>
<keyword id="KW-0808">Transferase</keyword>
<proteinExistence type="inferred from homology"/>
<evidence type="ECO:0000255" key="1">
    <source>
        <dbReference type="HAMAP-Rule" id="MF_02082"/>
    </source>
</evidence>
<accession>C3NF41</accession>
<protein>
    <recommendedName>
        <fullName evidence="1">[LysW]-aminoadipate/[LysW]-glutamate kinase</fullName>
        <ecNumber evidence="1">2.7.2.17</ecNumber>
        <ecNumber evidence="1">2.7.2.19</ecNumber>
    </recommendedName>
</protein>
<comment type="function">
    <text evidence="1">Involved in both the arginine and lysine biosynthetic pathways. Phosphorylates the LysW-bound precursors glutamate (for arginine biosynthesis), respectively alpha-aminoadipate (for lysine biosynthesis).</text>
</comment>
<comment type="catalytic activity">
    <reaction evidence="1">
        <text>[amino-group carrier protein]-C-terminal-N-(1,4-dicarboxybutan-1-yl)-L-glutamine + ATP = [amino-group carrier protein]-C-terminal-N-(1-carboxy-5-phosphooxy-5-oxopentan-1-yl)-L-glutamine + ADP</text>
        <dbReference type="Rhea" id="RHEA:41944"/>
        <dbReference type="Rhea" id="RHEA-COMP:9694"/>
        <dbReference type="Rhea" id="RHEA-COMP:9712"/>
        <dbReference type="ChEBI" id="CHEBI:30616"/>
        <dbReference type="ChEBI" id="CHEBI:78499"/>
        <dbReference type="ChEBI" id="CHEBI:78503"/>
        <dbReference type="ChEBI" id="CHEBI:456216"/>
        <dbReference type="EC" id="2.7.2.17"/>
    </reaction>
</comment>
<comment type="catalytic activity">
    <reaction evidence="1">
        <text>[amino-group carrier protein]-C-terminal-gamma-(L-glutamyl)-L-glutamate + ATP = [amino-group carrier protein]-C-terminal-gamma-(5-phospho-L-glutamyl)-L-glutamate + ADP</text>
        <dbReference type="Rhea" id="RHEA:52632"/>
        <dbReference type="Rhea" id="RHEA-COMP:13311"/>
        <dbReference type="Rhea" id="RHEA-COMP:13313"/>
        <dbReference type="ChEBI" id="CHEBI:30616"/>
        <dbReference type="ChEBI" id="CHEBI:136714"/>
        <dbReference type="ChEBI" id="CHEBI:136717"/>
        <dbReference type="ChEBI" id="CHEBI:456216"/>
        <dbReference type="EC" id="2.7.2.19"/>
    </reaction>
</comment>
<comment type="pathway">
    <text evidence="1">Amino-acid biosynthesis; L-lysine biosynthesis via AAA pathway; L-lysine from L-alpha-aminoadipate (Thermus route): step 2/5.</text>
</comment>
<comment type="pathway">
    <text evidence="1">Amino-acid biosynthesis; L-arginine biosynthesis.</text>
</comment>
<comment type="subcellular location">
    <subcellularLocation>
        <location evidence="1">Cytoplasm</location>
    </subcellularLocation>
</comment>
<comment type="similarity">
    <text evidence="1">Belongs to the acetylglutamate kinase family. LysZ subfamily.</text>
</comment>
<gene>
    <name evidence="1" type="primary">lysZ</name>
    <name type="ordered locus">YN1551_0812</name>
</gene>
<name>LYSZ_SACI1</name>
<sequence>MIVVKIGGRVVKNSLDKVILDIANINDKVILVHGGGDIVTDYTKRLGIEPVFVTSPEGIRSRYTTKEELEVYIMAMSLINKMITSKLCSLGKNAIGITGADGGLLLAERKKRIIVIDERGKKRIIEGGYTGKVKEVRSEVINHLMKLFDIIVVSPLALDVEESTPLNIDGDQAAFAISKAVKVNVLVILSDVEGVLVEGKVVDRLTPEEAKELSKKIGPGMNRKLLMAAESVENGVNKVIIGSGVKDRPVSSALELNGTVIVNG</sequence>
<dbReference type="EC" id="2.7.2.17" evidence="1"/>
<dbReference type="EC" id="2.7.2.19" evidence="1"/>
<dbReference type="EMBL" id="CP001404">
    <property type="protein sequence ID" value="ACP47937.1"/>
    <property type="molecule type" value="Genomic_DNA"/>
</dbReference>
<dbReference type="RefSeq" id="WP_012717228.1">
    <property type="nucleotide sequence ID" value="NC_012623.1"/>
</dbReference>
<dbReference type="SMR" id="C3NF41"/>
<dbReference type="GeneID" id="7811241"/>
<dbReference type="KEGG" id="sin:YN1551_0812"/>
<dbReference type="HOGENOM" id="CLU_053680_2_0_2"/>
<dbReference type="UniPathway" id="UPA00033">
    <property type="reaction ID" value="UER00036"/>
</dbReference>
<dbReference type="UniPathway" id="UPA00068"/>
<dbReference type="Proteomes" id="UP000006818">
    <property type="component" value="Chromosome"/>
</dbReference>
<dbReference type="GO" id="GO:0005737">
    <property type="term" value="C:cytoplasm"/>
    <property type="evidence" value="ECO:0007669"/>
    <property type="project" value="UniProtKB-SubCell"/>
</dbReference>
<dbReference type="GO" id="GO:0003991">
    <property type="term" value="F:acetylglutamate kinase activity"/>
    <property type="evidence" value="ECO:0007669"/>
    <property type="project" value="TreeGrafter"/>
</dbReference>
<dbReference type="GO" id="GO:0005524">
    <property type="term" value="F:ATP binding"/>
    <property type="evidence" value="ECO:0007669"/>
    <property type="project" value="UniProtKB-KW"/>
</dbReference>
<dbReference type="GO" id="GO:0043744">
    <property type="term" value="F:N2-acetyl-L-aminoadipate kinase activity"/>
    <property type="evidence" value="ECO:0007669"/>
    <property type="project" value="RHEA"/>
</dbReference>
<dbReference type="GO" id="GO:0042450">
    <property type="term" value="P:arginine biosynthetic process via ornithine"/>
    <property type="evidence" value="ECO:0007669"/>
    <property type="project" value="UniProtKB-UniRule"/>
</dbReference>
<dbReference type="GO" id="GO:0006526">
    <property type="term" value="P:L-arginine biosynthetic process"/>
    <property type="evidence" value="ECO:0007669"/>
    <property type="project" value="UniProtKB-UniPathway"/>
</dbReference>
<dbReference type="GO" id="GO:0019878">
    <property type="term" value="P:lysine biosynthetic process via aminoadipic acid"/>
    <property type="evidence" value="ECO:0007669"/>
    <property type="project" value="UniProtKB-UniRule"/>
</dbReference>
<dbReference type="CDD" id="cd04251">
    <property type="entry name" value="AAK_NAGK-UC"/>
    <property type="match status" value="1"/>
</dbReference>
<dbReference type="Gene3D" id="3.40.1160.10">
    <property type="entry name" value="Acetylglutamate kinase-like"/>
    <property type="match status" value="1"/>
</dbReference>
<dbReference type="HAMAP" id="MF_02082">
    <property type="entry name" value="LysZ"/>
    <property type="match status" value="1"/>
</dbReference>
<dbReference type="InterPro" id="IPR036393">
    <property type="entry name" value="AceGlu_kinase-like_sf"/>
</dbReference>
<dbReference type="InterPro" id="IPR004662">
    <property type="entry name" value="AcgluKinase_fam"/>
</dbReference>
<dbReference type="InterPro" id="IPR001048">
    <property type="entry name" value="Asp/Glu/Uridylate_kinase"/>
</dbReference>
<dbReference type="InterPro" id="IPR037529">
    <property type="entry name" value="LysZ"/>
</dbReference>
<dbReference type="NCBIfam" id="TIGR00761">
    <property type="entry name" value="argB"/>
    <property type="match status" value="1"/>
</dbReference>
<dbReference type="NCBIfam" id="NF010662">
    <property type="entry name" value="PRK14058.1-4"/>
    <property type="match status" value="1"/>
</dbReference>
<dbReference type="PANTHER" id="PTHR23342">
    <property type="entry name" value="N-ACETYLGLUTAMATE SYNTHASE"/>
    <property type="match status" value="1"/>
</dbReference>
<dbReference type="PANTHER" id="PTHR23342:SF0">
    <property type="entry name" value="N-ACETYLGLUTAMATE SYNTHASE, MITOCHONDRIAL"/>
    <property type="match status" value="1"/>
</dbReference>
<dbReference type="Pfam" id="PF00696">
    <property type="entry name" value="AA_kinase"/>
    <property type="match status" value="1"/>
</dbReference>
<dbReference type="PIRSF" id="PIRSF000728">
    <property type="entry name" value="NAGK"/>
    <property type="match status" value="1"/>
</dbReference>
<dbReference type="SUPFAM" id="SSF53633">
    <property type="entry name" value="Carbamate kinase-like"/>
    <property type="match status" value="1"/>
</dbReference>
<reference key="1">
    <citation type="journal article" date="2009" name="Proc. Natl. Acad. Sci. U.S.A.">
        <title>Biogeography of the Sulfolobus islandicus pan-genome.</title>
        <authorList>
            <person name="Reno M.L."/>
            <person name="Held N.L."/>
            <person name="Fields C.J."/>
            <person name="Burke P.V."/>
            <person name="Whitaker R.J."/>
        </authorList>
    </citation>
    <scope>NUCLEOTIDE SEQUENCE [LARGE SCALE GENOMIC DNA]</scope>
    <source>
        <strain>Y.N.15.51 / Yellowstone #2</strain>
    </source>
</reference>